<dbReference type="EC" id="3.5.1.5" evidence="1"/>
<dbReference type="EMBL" id="CP000024">
    <property type="protein sequence ID" value="AAV61894.1"/>
    <property type="molecule type" value="Genomic_DNA"/>
</dbReference>
<dbReference type="RefSeq" id="WP_002886559.1">
    <property type="nucleotide sequence ID" value="NC_006449.1"/>
</dbReference>
<dbReference type="SMR" id="Q5M1G7"/>
<dbReference type="KEGG" id="stc:str0282"/>
<dbReference type="HOGENOM" id="CLU_129707_1_1_9"/>
<dbReference type="UniPathway" id="UPA00258">
    <property type="reaction ID" value="UER00370"/>
</dbReference>
<dbReference type="GO" id="GO:0035550">
    <property type="term" value="C:urease complex"/>
    <property type="evidence" value="ECO:0007669"/>
    <property type="project" value="InterPro"/>
</dbReference>
<dbReference type="GO" id="GO:0009039">
    <property type="term" value="F:urease activity"/>
    <property type="evidence" value="ECO:0007669"/>
    <property type="project" value="UniProtKB-UniRule"/>
</dbReference>
<dbReference type="GO" id="GO:0043419">
    <property type="term" value="P:urea catabolic process"/>
    <property type="evidence" value="ECO:0007669"/>
    <property type="project" value="UniProtKB-UniRule"/>
</dbReference>
<dbReference type="CDD" id="cd00407">
    <property type="entry name" value="Urease_beta"/>
    <property type="match status" value="1"/>
</dbReference>
<dbReference type="FunFam" id="2.10.150.10:FF:000001">
    <property type="entry name" value="Urease subunit beta"/>
    <property type="match status" value="1"/>
</dbReference>
<dbReference type="Gene3D" id="2.10.150.10">
    <property type="entry name" value="Urease, beta subunit"/>
    <property type="match status" value="1"/>
</dbReference>
<dbReference type="HAMAP" id="MF_01954">
    <property type="entry name" value="Urease_beta"/>
    <property type="match status" value="1"/>
</dbReference>
<dbReference type="InterPro" id="IPR002019">
    <property type="entry name" value="Urease_beta-like"/>
</dbReference>
<dbReference type="InterPro" id="IPR036461">
    <property type="entry name" value="Urease_betasu_sf"/>
</dbReference>
<dbReference type="InterPro" id="IPR050069">
    <property type="entry name" value="Urease_subunit"/>
</dbReference>
<dbReference type="NCBIfam" id="NF009682">
    <property type="entry name" value="PRK13203.1"/>
    <property type="match status" value="1"/>
</dbReference>
<dbReference type="NCBIfam" id="TIGR00192">
    <property type="entry name" value="urease_beta"/>
    <property type="match status" value="1"/>
</dbReference>
<dbReference type="PANTHER" id="PTHR33569">
    <property type="entry name" value="UREASE"/>
    <property type="match status" value="1"/>
</dbReference>
<dbReference type="PANTHER" id="PTHR33569:SF1">
    <property type="entry name" value="UREASE"/>
    <property type="match status" value="1"/>
</dbReference>
<dbReference type="Pfam" id="PF00699">
    <property type="entry name" value="Urease_beta"/>
    <property type="match status" value="1"/>
</dbReference>
<dbReference type="SUPFAM" id="SSF51278">
    <property type="entry name" value="Urease, beta-subunit"/>
    <property type="match status" value="1"/>
</dbReference>
<sequence>MIPGEYHVASEPIDYNGGYEAISLEVKNVGDRAAQVGSHYHFYEANEAGLQFDREKARGKRLDIPAGTAIRFEPGETKTVQLIDFGGKRRIFGFNNKVNGFLD</sequence>
<gene>
    <name evidence="1" type="primary">ureB</name>
    <name type="ordered locus">str0282</name>
</gene>
<feature type="chain" id="PRO_0000234276" description="Urease subunit beta">
    <location>
        <begin position="1"/>
        <end position="103"/>
    </location>
</feature>
<proteinExistence type="inferred from homology"/>
<keyword id="KW-0963">Cytoplasm</keyword>
<keyword id="KW-0378">Hydrolase</keyword>
<organism>
    <name type="scientific">Streptococcus thermophilus (strain CNRZ 1066)</name>
    <dbReference type="NCBI Taxonomy" id="299768"/>
    <lineage>
        <taxon>Bacteria</taxon>
        <taxon>Bacillati</taxon>
        <taxon>Bacillota</taxon>
        <taxon>Bacilli</taxon>
        <taxon>Lactobacillales</taxon>
        <taxon>Streptococcaceae</taxon>
        <taxon>Streptococcus</taxon>
    </lineage>
</organism>
<name>URE2_STRT1</name>
<evidence type="ECO:0000255" key="1">
    <source>
        <dbReference type="HAMAP-Rule" id="MF_01954"/>
    </source>
</evidence>
<reference key="1">
    <citation type="journal article" date="2004" name="Nat. Biotechnol.">
        <title>Complete sequence and comparative genome analysis of the dairy bacterium Streptococcus thermophilus.</title>
        <authorList>
            <person name="Bolotin A."/>
            <person name="Quinquis B."/>
            <person name="Renault P."/>
            <person name="Sorokin A."/>
            <person name="Ehrlich S.D."/>
            <person name="Kulakauskas S."/>
            <person name="Lapidus A."/>
            <person name="Goltsman E."/>
            <person name="Mazur M."/>
            <person name="Pusch G.D."/>
            <person name="Fonstein M."/>
            <person name="Overbeek R."/>
            <person name="Kyprides N."/>
            <person name="Purnelle B."/>
            <person name="Prozzi D."/>
            <person name="Ngui K."/>
            <person name="Masuy D."/>
            <person name="Hancy F."/>
            <person name="Burteau S."/>
            <person name="Boutry M."/>
            <person name="Delcour J."/>
            <person name="Goffeau A."/>
            <person name="Hols P."/>
        </authorList>
    </citation>
    <scope>NUCLEOTIDE SEQUENCE [LARGE SCALE GENOMIC DNA]</scope>
    <source>
        <strain>CNRZ 1066</strain>
    </source>
</reference>
<protein>
    <recommendedName>
        <fullName evidence="1">Urease subunit beta</fullName>
        <ecNumber evidence="1">3.5.1.5</ecNumber>
    </recommendedName>
    <alternativeName>
        <fullName evidence="1">Urea amidohydrolase subunit beta</fullName>
    </alternativeName>
</protein>
<accession>Q5M1G7</accession>
<comment type="catalytic activity">
    <reaction evidence="1">
        <text>urea + 2 H2O + H(+) = hydrogencarbonate + 2 NH4(+)</text>
        <dbReference type="Rhea" id="RHEA:20557"/>
        <dbReference type="ChEBI" id="CHEBI:15377"/>
        <dbReference type="ChEBI" id="CHEBI:15378"/>
        <dbReference type="ChEBI" id="CHEBI:16199"/>
        <dbReference type="ChEBI" id="CHEBI:17544"/>
        <dbReference type="ChEBI" id="CHEBI:28938"/>
        <dbReference type="EC" id="3.5.1.5"/>
    </reaction>
</comment>
<comment type="pathway">
    <text evidence="1">Nitrogen metabolism; urea degradation; CO(2) and NH(3) from urea (urease route): step 1/1.</text>
</comment>
<comment type="subunit">
    <text evidence="1">Heterotrimer of UreA (gamma), UreB (beta) and UreC (alpha) subunits. Three heterotrimers associate to form the active enzyme.</text>
</comment>
<comment type="subcellular location">
    <subcellularLocation>
        <location evidence="1">Cytoplasm</location>
    </subcellularLocation>
</comment>
<comment type="similarity">
    <text evidence="1">Belongs to the urease beta subunit family.</text>
</comment>